<reference key="1">
    <citation type="journal article" date="2008" name="J. Bacteriol.">
        <title>Genome sequence of Staphylococcus aureus strain Newman and comparative analysis of staphylococcal genomes: polymorphism and evolution of two major pathogenicity islands.</title>
        <authorList>
            <person name="Baba T."/>
            <person name="Bae T."/>
            <person name="Schneewind O."/>
            <person name="Takeuchi F."/>
            <person name="Hiramatsu K."/>
        </authorList>
    </citation>
    <scope>NUCLEOTIDE SEQUENCE [LARGE SCALE GENOMIC DNA]</scope>
    <source>
        <strain>Newman</strain>
    </source>
</reference>
<comment type="function">
    <text evidence="1">Endonuclease that specifically degrades the RNA of RNA-DNA hybrids.</text>
</comment>
<comment type="catalytic activity">
    <reaction evidence="1">
        <text>Endonucleolytic cleavage to 5'-phosphomonoester.</text>
        <dbReference type="EC" id="3.1.26.4"/>
    </reaction>
</comment>
<comment type="cofactor">
    <cofactor evidence="1">
        <name>Mn(2+)</name>
        <dbReference type="ChEBI" id="CHEBI:29035"/>
    </cofactor>
    <cofactor evidence="1">
        <name>Mg(2+)</name>
        <dbReference type="ChEBI" id="CHEBI:18420"/>
    </cofactor>
    <text evidence="1">Manganese or magnesium. Binds 1 divalent metal ion per monomer in the absence of substrate. May bind a second metal ion after substrate binding.</text>
</comment>
<comment type="subcellular location">
    <subcellularLocation>
        <location evidence="1">Cytoplasm</location>
    </subcellularLocation>
</comment>
<comment type="similarity">
    <text evidence="1">Belongs to the RNase HII family.</text>
</comment>
<feature type="chain" id="PRO_1000071138" description="Ribonuclease HII">
    <location>
        <begin position="1"/>
        <end position="255"/>
    </location>
</feature>
<feature type="domain" description="RNase H type-2" evidence="2">
    <location>
        <begin position="72"/>
        <end position="255"/>
    </location>
</feature>
<feature type="binding site" evidence="1">
    <location>
        <position position="78"/>
    </location>
    <ligand>
        <name>a divalent metal cation</name>
        <dbReference type="ChEBI" id="CHEBI:60240"/>
    </ligand>
</feature>
<feature type="binding site" evidence="1">
    <location>
        <position position="79"/>
    </location>
    <ligand>
        <name>a divalent metal cation</name>
        <dbReference type="ChEBI" id="CHEBI:60240"/>
    </ligand>
</feature>
<feature type="binding site" evidence="1">
    <location>
        <position position="170"/>
    </location>
    <ligand>
        <name>a divalent metal cation</name>
        <dbReference type="ChEBI" id="CHEBI:60240"/>
    </ligand>
</feature>
<dbReference type="EC" id="3.1.26.4" evidence="1"/>
<dbReference type="EMBL" id="AP009351">
    <property type="protein sequence ID" value="BAF67426.1"/>
    <property type="molecule type" value="Genomic_DNA"/>
</dbReference>
<dbReference type="RefSeq" id="WP_000176394.1">
    <property type="nucleotide sequence ID" value="NZ_JBBIAE010000001.1"/>
</dbReference>
<dbReference type="SMR" id="A6QGE4"/>
<dbReference type="KEGG" id="sae:NWMN_1154"/>
<dbReference type="HOGENOM" id="CLU_036532_2_1_9"/>
<dbReference type="Proteomes" id="UP000006386">
    <property type="component" value="Chromosome"/>
</dbReference>
<dbReference type="GO" id="GO:0005737">
    <property type="term" value="C:cytoplasm"/>
    <property type="evidence" value="ECO:0007669"/>
    <property type="project" value="UniProtKB-SubCell"/>
</dbReference>
<dbReference type="GO" id="GO:0032299">
    <property type="term" value="C:ribonuclease H2 complex"/>
    <property type="evidence" value="ECO:0007669"/>
    <property type="project" value="TreeGrafter"/>
</dbReference>
<dbReference type="GO" id="GO:0030145">
    <property type="term" value="F:manganese ion binding"/>
    <property type="evidence" value="ECO:0007669"/>
    <property type="project" value="UniProtKB-UniRule"/>
</dbReference>
<dbReference type="GO" id="GO:0003723">
    <property type="term" value="F:RNA binding"/>
    <property type="evidence" value="ECO:0007669"/>
    <property type="project" value="InterPro"/>
</dbReference>
<dbReference type="GO" id="GO:0004523">
    <property type="term" value="F:RNA-DNA hybrid ribonuclease activity"/>
    <property type="evidence" value="ECO:0007669"/>
    <property type="project" value="UniProtKB-UniRule"/>
</dbReference>
<dbReference type="GO" id="GO:0043137">
    <property type="term" value="P:DNA replication, removal of RNA primer"/>
    <property type="evidence" value="ECO:0007669"/>
    <property type="project" value="TreeGrafter"/>
</dbReference>
<dbReference type="GO" id="GO:0006298">
    <property type="term" value="P:mismatch repair"/>
    <property type="evidence" value="ECO:0007669"/>
    <property type="project" value="TreeGrafter"/>
</dbReference>
<dbReference type="CDD" id="cd07182">
    <property type="entry name" value="RNase_HII_bacteria_HII_like"/>
    <property type="match status" value="1"/>
</dbReference>
<dbReference type="FunFam" id="3.30.420.10:FF:000006">
    <property type="entry name" value="Ribonuclease HII"/>
    <property type="match status" value="1"/>
</dbReference>
<dbReference type="Gene3D" id="3.30.420.10">
    <property type="entry name" value="Ribonuclease H-like superfamily/Ribonuclease H"/>
    <property type="match status" value="1"/>
</dbReference>
<dbReference type="HAMAP" id="MF_00052_B">
    <property type="entry name" value="RNase_HII_B"/>
    <property type="match status" value="1"/>
</dbReference>
<dbReference type="InterPro" id="IPR022898">
    <property type="entry name" value="RNase_HII"/>
</dbReference>
<dbReference type="InterPro" id="IPR001352">
    <property type="entry name" value="RNase_HII/HIII"/>
</dbReference>
<dbReference type="InterPro" id="IPR024567">
    <property type="entry name" value="RNase_HII/HIII_dom"/>
</dbReference>
<dbReference type="InterPro" id="IPR012337">
    <property type="entry name" value="RNaseH-like_sf"/>
</dbReference>
<dbReference type="InterPro" id="IPR036397">
    <property type="entry name" value="RNaseH_sf"/>
</dbReference>
<dbReference type="NCBIfam" id="NF000594">
    <property type="entry name" value="PRK00015.1-1"/>
    <property type="match status" value="1"/>
</dbReference>
<dbReference type="NCBIfam" id="NF000595">
    <property type="entry name" value="PRK00015.1-3"/>
    <property type="match status" value="1"/>
</dbReference>
<dbReference type="PANTHER" id="PTHR10954">
    <property type="entry name" value="RIBONUCLEASE H2 SUBUNIT A"/>
    <property type="match status" value="1"/>
</dbReference>
<dbReference type="PANTHER" id="PTHR10954:SF18">
    <property type="entry name" value="RIBONUCLEASE HII"/>
    <property type="match status" value="1"/>
</dbReference>
<dbReference type="Pfam" id="PF01351">
    <property type="entry name" value="RNase_HII"/>
    <property type="match status" value="1"/>
</dbReference>
<dbReference type="SUPFAM" id="SSF53098">
    <property type="entry name" value="Ribonuclease H-like"/>
    <property type="match status" value="1"/>
</dbReference>
<dbReference type="PROSITE" id="PS51975">
    <property type="entry name" value="RNASE_H_2"/>
    <property type="match status" value="1"/>
</dbReference>
<sequence>MTLTIKEVTQLINAVNTIEELENHECFLDERKGVQNAIARRRKALEKEQALKEKYVEMTYFENEILKEHPNAIICGIDEVGRGPLAGPVVACATILNSNHNYLGLDDSKKVPVTKRLELNEALKNEVTAFAYGIATAEEIDEFNIYKATQIAMQRAIDGLSVQPTHLLIDAMTLDNALPQVSLIKGDARSVSIAAASIMAKVFRDDYMTQLSKDYPEYGFEKNAGYGTKQHLLAIDDIGIMKEHRKSFEPIKSLL</sequence>
<protein>
    <recommendedName>
        <fullName evidence="1">Ribonuclease HII</fullName>
        <shortName evidence="1">RNase HII</shortName>
        <ecNumber evidence="1">3.1.26.4</ecNumber>
    </recommendedName>
</protein>
<accession>A6QGE4</accession>
<proteinExistence type="inferred from homology"/>
<organism>
    <name type="scientific">Staphylococcus aureus (strain Newman)</name>
    <dbReference type="NCBI Taxonomy" id="426430"/>
    <lineage>
        <taxon>Bacteria</taxon>
        <taxon>Bacillati</taxon>
        <taxon>Bacillota</taxon>
        <taxon>Bacilli</taxon>
        <taxon>Bacillales</taxon>
        <taxon>Staphylococcaceae</taxon>
        <taxon>Staphylococcus</taxon>
    </lineage>
</organism>
<evidence type="ECO:0000255" key="1">
    <source>
        <dbReference type="HAMAP-Rule" id="MF_00052"/>
    </source>
</evidence>
<evidence type="ECO:0000255" key="2">
    <source>
        <dbReference type="PROSITE-ProRule" id="PRU01319"/>
    </source>
</evidence>
<keyword id="KW-0963">Cytoplasm</keyword>
<keyword id="KW-0255">Endonuclease</keyword>
<keyword id="KW-0378">Hydrolase</keyword>
<keyword id="KW-0464">Manganese</keyword>
<keyword id="KW-0479">Metal-binding</keyword>
<keyword id="KW-0540">Nuclease</keyword>
<gene>
    <name evidence="1" type="primary">rnhB</name>
    <name type="ordered locus">NWMN_1154</name>
</gene>
<name>RNH2_STAAE</name>